<protein>
    <recommendedName>
        <fullName evidence="9">Cytosolic phospholipase A2 epsilon</fullName>
        <shortName evidence="9">cPLA2-epsilon</shortName>
        <ecNumber evidence="2">3.1.1.4</ecNumber>
    </recommendedName>
    <alternativeName>
        <fullName evidence="10">Calcium-dependent N-acyltransferase</fullName>
    </alternativeName>
    <alternativeName>
        <fullName>Phospholipase A2 group IVE</fullName>
    </alternativeName>
</protein>
<gene>
    <name evidence="14" type="primary">PLA2G4E</name>
</gene>
<keyword id="KW-0025">Alternative splicing</keyword>
<keyword id="KW-0106">Calcium</keyword>
<keyword id="KW-1003">Cell membrane</keyword>
<keyword id="KW-0963">Cytoplasm</keyword>
<keyword id="KW-0967">Endosome</keyword>
<keyword id="KW-0378">Hydrolase</keyword>
<keyword id="KW-0442">Lipid degradation</keyword>
<keyword id="KW-0443">Lipid metabolism</keyword>
<keyword id="KW-0458">Lysosome</keyword>
<keyword id="KW-0472">Membrane</keyword>
<keyword id="KW-0479">Metal-binding</keyword>
<keyword id="KW-0597">Phosphoprotein</keyword>
<keyword id="KW-1267">Proteomics identification</keyword>
<keyword id="KW-1185">Reference proteome</keyword>
<keyword id="KW-0808">Transferase</keyword>
<name>PA24E_HUMAN</name>
<evidence type="ECO:0000250" key="1"/>
<evidence type="ECO:0000250" key="2">
    <source>
        <dbReference type="UniProtKB" id="Q50L42"/>
    </source>
</evidence>
<evidence type="ECO:0000255" key="3">
    <source>
        <dbReference type="PROSITE-ProRule" id="PRU00041"/>
    </source>
</evidence>
<evidence type="ECO:0000255" key="4">
    <source>
        <dbReference type="PROSITE-ProRule" id="PRU00555"/>
    </source>
</evidence>
<evidence type="ECO:0000256" key="5">
    <source>
        <dbReference type="SAM" id="MobiDB-lite"/>
    </source>
</evidence>
<evidence type="ECO:0000269" key="6">
    <source>
    </source>
</evidence>
<evidence type="ECO:0000269" key="7">
    <source>
    </source>
</evidence>
<evidence type="ECO:0000303" key="8">
    <source>
    </source>
</evidence>
<evidence type="ECO:0000303" key="9">
    <source>
    </source>
</evidence>
<evidence type="ECO:0000303" key="10">
    <source>
    </source>
</evidence>
<evidence type="ECO:0000305" key="11"/>
<evidence type="ECO:0000305" key="12">
    <source>
    </source>
</evidence>
<evidence type="ECO:0000305" key="13">
    <source>
    </source>
</evidence>
<evidence type="ECO:0000312" key="14">
    <source>
        <dbReference type="HGNC" id="HGNC:24791"/>
    </source>
</evidence>
<sequence>MSLQASEGCPGLGTNVFVPQSPQTDEEGSRSGRSFSEFEDTQDLDTPGLPPFCPMAPWGSEEGLSPCHLLTVRVIRMKNVRQADMLSQTDCFVSLWLPTASQKKLRTRTISNCPNPEWNESFNFQIQSRVKNVLELSVCDEDTVTPDDHLLTVLYDLTKLCFRKKTHVKFPLNPQGMEELEVEFLLEESPSPPETLVTNGVLVSRQVSCLEVHAQSRRRRKREKMKDLLVMVNESFENTQRVRPCLEPCCPTSACFQTAACFHYPKYFQSQVHVEVPKSHWSCGLCCRSRKKGPISQPLDCLSDGQVMTLPVGESYELHMKSTPCPETLDVRLGFSLCPAELEFLQKRKVVVAKALKQVLQLEEDLQEDEVPLIAIMATGGGTRSMTSMYGHLLGLQKLNLLDCASYITGLSGATWTMATLYRDPDWSSKNLEPAIFEARRHVVKDKLPSLFPDQLRKFQEELRQRSQEGYRVTFTDFWGLLIETCLGDERNECKLSDQRAALSCGQNPLPIYLTINVKDDVSNQDFREWFEFSPYEVGLQKYGAFIPSELFGSEFFMGRLVKRIPESRICYMLGLWSSIFSLNLLDAWNLSHTSEEFFHRWTREKVQDIEDEPILPEIPKCDANILETTVVIPGSWLSNSFREILTHRSFVSEFHNFLSGLQLHTNYLQNGQFSRWKDTVLDGFPNQLTESANHLCLLDTAFFVNSSYPPLLRPERKADLIIHLNYCAGSQTKPLKQTCEYCTVQNIPFPKYELPDENENLKECYLMENPQEPDAPIVTFFPLINDTFRKYKAPGVERSPEELEQGQVDIYGPKTPYATKELTYTEATFDKLVKLSEYNILNNKDTLLQALRLAVEKKKRLKGQCPS</sequence>
<dbReference type="EC" id="3.1.1.4" evidence="2"/>
<dbReference type="EMBL" id="AK127558">
    <property type="protein sequence ID" value="BAC87034.1"/>
    <property type="molecule type" value="mRNA"/>
</dbReference>
<dbReference type="EMBL" id="AC039056">
    <property type="status" value="NOT_ANNOTATED_CDS"/>
    <property type="molecule type" value="Genomic_DNA"/>
</dbReference>
<dbReference type="EMBL" id="BC101584">
    <property type="protein sequence ID" value="AAI01585.2"/>
    <property type="molecule type" value="mRNA"/>
</dbReference>
<dbReference type="EMBL" id="BC101612">
    <property type="protein sequence ID" value="AAI01613.2"/>
    <property type="molecule type" value="mRNA"/>
</dbReference>
<dbReference type="CCDS" id="CCDS55962.1">
    <molecule id="Q3MJ16-3"/>
</dbReference>
<dbReference type="RefSeq" id="NP_001193599.1">
    <molecule id="Q3MJ16-3"/>
    <property type="nucleotide sequence ID" value="NM_001206670.1"/>
</dbReference>
<dbReference type="RefSeq" id="XP_011519540.1">
    <molecule id="Q3MJ16-2"/>
    <property type="nucleotide sequence ID" value="XM_011521238.2"/>
</dbReference>
<dbReference type="RefSeq" id="XP_054233282.1">
    <molecule id="Q3MJ16-2"/>
    <property type="nucleotide sequence ID" value="XM_054377307.1"/>
</dbReference>
<dbReference type="SMR" id="Q3MJ16"/>
<dbReference type="BioGRID" id="125832">
    <property type="interactions" value="32"/>
</dbReference>
<dbReference type="FunCoup" id="Q3MJ16">
    <property type="interactions" value="992"/>
</dbReference>
<dbReference type="IntAct" id="Q3MJ16">
    <property type="interactions" value="17"/>
</dbReference>
<dbReference type="STRING" id="9606.ENSP00000382434"/>
<dbReference type="ChEMBL" id="CHEMBL3831242"/>
<dbReference type="iPTMnet" id="Q3MJ16"/>
<dbReference type="PhosphoSitePlus" id="Q3MJ16"/>
<dbReference type="BioMuta" id="PLA2G4E"/>
<dbReference type="DMDM" id="325511387"/>
<dbReference type="MassIVE" id="Q3MJ16"/>
<dbReference type="PaxDb" id="9606-ENSP00000382434"/>
<dbReference type="PeptideAtlas" id="Q3MJ16"/>
<dbReference type="ProteomicsDB" id="61802">
    <molecule id="Q3MJ16-2"/>
</dbReference>
<dbReference type="ProteomicsDB" id="6312"/>
<dbReference type="Antibodypedia" id="42114">
    <property type="antibodies" value="79 antibodies from 22 providers"/>
</dbReference>
<dbReference type="DNASU" id="123745"/>
<dbReference type="Ensembl" id="ENST00000399518.3">
    <molecule id="Q3MJ16-3"/>
    <property type="protein sequence ID" value="ENSP00000382434.3"/>
    <property type="gene ID" value="ENSG00000188089.14"/>
</dbReference>
<dbReference type="GeneID" id="123745"/>
<dbReference type="KEGG" id="hsa:123745"/>
<dbReference type="UCSC" id="uc021sjp.2">
    <property type="organism name" value="human"/>
</dbReference>
<dbReference type="AGR" id="HGNC:24791"/>
<dbReference type="CTD" id="123745"/>
<dbReference type="DisGeNET" id="123745"/>
<dbReference type="GeneCards" id="PLA2G4E"/>
<dbReference type="HGNC" id="HGNC:24791">
    <property type="gene designation" value="PLA2G4E"/>
</dbReference>
<dbReference type="HPA" id="ENSG00000188089">
    <property type="expression patterns" value="Tissue enriched (skin)"/>
</dbReference>
<dbReference type="MIM" id="620649">
    <property type="type" value="gene"/>
</dbReference>
<dbReference type="neXtProt" id="NX_Q3MJ16"/>
<dbReference type="OpenTargets" id="ENSG00000188089"/>
<dbReference type="VEuPathDB" id="HostDB:ENSG00000188089"/>
<dbReference type="eggNOG" id="KOG1028">
    <property type="taxonomic scope" value="Eukaryota"/>
</dbReference>
<dbReference type="eggNOG" id="KOG1325">
    <property type="taxonomic scope" value="Eukaryota"/>
</dbReference>
<dbReference type="GeneTree" id="ENSGT01030000234606"/>
<dbReference type="InParanoid" id="Q3MJ16"/>
<dbReference type="OMA" id="SFENTQR"/>
<dbReference type="OrthoDB" id="419768at2759"/>
<dbReference type="PAN-GO" id="Q3MJ16">
    <property type="GO annotations" value="5 GO annotations based on evolutionary models"/>
</dbReference>
<dbReference type="PhylomeDB" id="Q3MJ16"/>
<dbReference type="TreeFam" id="TF325228"/>
<dbReference type="PathwayCommons" id="Q3MJ16"/>
<dbReference type="Reactome" id="R-HSA-1482788">
    <property type="pathway name" value="Acyl chain remodelling of PC"/>
</dbReference>
<dbReference type="Reactome" id="R-HSA-1482801">
    <property type="pathway name" value="Acyl chain remodelling of PS"/>
</dbReference>
<dbReference type="Reactome" id="R-HSA-1482839">
    <property type="pathway name" value="Acyl chain remodelling of PE"/>
</dbReference>
<dbReference type="Reactome" id="R-HSA-1482922">
    <property type="pathway name" value="Acyl chain remodelling of PI"/>
</dbReference>
<dbReference type="Reactome" id="R-HSA-1483115">
    <property type="pathway name" value="Hydrolysis of LPC"/>
</dbReference>
<dbReference type="SignaLink" id="Q3MJ16"/>
<dbReference type="BioGRID-ORCS" id="123745">
    <property type="hits" value="19 hits in 1145 CRISPR screens"/>
</dbReference>
<dbReference type="GenomeRNAi" id="123745"/>
<dbReference type="Pharos" id="Q3MJ16">
    <property type="development level" value="Tbio"/>
</dbReference>
<dbReference type="PRO" id="PR:Q3MJ16"/>
<dbReference type="Proteomes" id="UP000005640">
    <property type="component" value="Chromosome 15"/>
</dbReference>
<dbReference type="RNAct" id="Q3MJ16">
    <property type="molecule type" value="protein"/>
</dbReference>
<dbReference type="Bgee" id="ENSG00000188089">
    <property type="expression patterns" value="Expressed in skin of leg and 46 other cell types or tissues"/>
</dbReference>
<dbReference type="GO" id="GO:0005829">
    <property type="term" value="C:cytosol"/>
    <property type="evidence" value="ECO:0000318"/>
    <property type="project" value="GO_Central"/>
</dbReference>
<dbReference type="GO" id="GO:0031901">
    <property type="term" value="C:early endosome membrane"/>
    <property type="evidence" value="ECO:0000250"/>
    <property type="project" value="UniProtKB"/>
</dbReference>
<dbReference type="GO" id="GO:0005765">
    <property type="term" value="C:lysosomal membrane"/>
    <property type="evidence" value="ECO:0000250"/>
    <property type="project" value="UniProtKB"/>
</dbReference>
<dbReference type="GO" id="GO:0005886">
    <property type="term" value="C:plasma membrane"/>
    <property type="evidence" value="ECO:0000250"/>
    <property type="project" value="UniProtKB"/>
</dbReference>
<dbReference type="GO" id="GO:0005509">
    <property type="term" value="F:calcium ion binding"/>
    <property type="evidence" value="ECO:0000318"/>
    <property type="project" value="GO_Central"/>
</dbReference>
<dbReference type="GO" id="GO:0047498">
    <property type="term" value="F:calcium-dependent phospholipase A2 activity"/>
    <property type="evidence" value="ECO:0000318"/>
    <property type="project" value="GO_Central"/>
</dbReference>
<dbReference type="GO" id="GO:0005544">
    <property type="term" value="F:calcium-dependent phospholipid binding"/>
    <property type="evidence" value="ECO:0000318"/>
    <property type="project" value="GO_Central"/>
</dbReference>
<dbReference type="GO" id="GO:0016410">
    <property type="term" value="F:N-acyltransferase activity"/>
    <property type="evidence" value="ECO:0000314"/>
    <property type="project" value="UniProtKB"/>
</dbReference>
<dbReference type="GO" id="GO:0005547">
    <property type="term" value="F:phosphatidylinositol-3,4,5-trisphosphate binding"/>
    <property type="evidence" value="ECO:0000250"/>
    <property type="project" value="UniProtKB"/>
</dbReference>
<dbReference type="GO" id="GO:0043325">
    <property type="term" value="F:phosphatidylinositol-3,4-bisphosphate binding"/>
    <property type="evidence" value="ECO:0000250"/>
    <property type="project" value="UniProtKB"/>
</dbReference>
<dbReference type="GO" id="GO:0080025">
    <property type="term" value="F:phosphatidylinositol-3,5-bisphosphate binding"/>
    <property type="evidence" value="ECO:0000250"/>
    <property type="project" value="UniProtKB"/>
</dbReference>
<dbReference type="GO" id="GO:0032266">
    <property type="term" value="F:phosphatidylinositol-3-phosphate binding"/>
    <property type="evidence" value="ECO:0000250"/>
    <property type="project" value="UniProtKB"/>
</dbReference>
<dbReference type="GO" id="GO:0005546">
    <property type="term" value="F:phosphatidylinositol-4,5-bisphosphate binding"/>
    <property type="evidence" value="ECO:0000250"/>
    <property type="project" value="UniProtKB"/>
</dbReference>
<dbReference type="GO" id="GO:0070273">
    <property type="term" value="F:phosphatidylinositol-4-phosphate binding"/>
    <property type="evidence" value="ECO:0000250"/>
    <property type="project" value="UniProtKB"/>
</dbReference>
<dbReference type="GO" id="GO:0010314">
    <property type="term" value="F:phosphatidylinositol-5-phosphate binding"/>
    <property type="evidence" value="ECO:0000250"/>
    <property type="project" value="UniProtKB"/>
</dbReference>
<dbReference type="GO" id="GO:0008970">
    <property type="term" value="F:phospholipase A1 activity"/>
    <property type="evidence" value="ECO:0000304"/>
    <property type="project" value="Reactome"/>
</dbReference>
<dbReference type="GO" id="GO:0046475">
    <property type="term" value="P:glycerophospholipid catabolic process"/>
    <property type="evidence" value="ECO:0000318"/>
    <property type="project" value="GO_Central"/>
</dbReference>
<dbReference type="GO" id="GO:0070292">
    <property type="term" value="P:N-acylphosphatidylethanolamine metabolic process"/>
    <property type="evidence" value="ECO:0000314"/>
    <property type="project" value="UniProtKB"/>
</dbReference>
<dbReference type="GO" id="GO:0036149">
    <property type="term" value="P:phosphatidylinositol acyl-chain remodeling"/>
    <property type="evidence" value="ECO:0000304"/>
    <property type="project" value="Reactome"/>
</dbReference>
<dbReference type="GO" id="GO:2001137">
    <property type="term" value="P:positive regulation of endocytic recycling"/>
    <property type="evidence" value="ECO:0000315"/>
    <property type="project" value="UniProtKB"/>
</dbReference>
<dbReference type="CDD" id="cd04036">
    <property type="entry name" value="C2_cPLA2"/>
    <property type="match status" value="1"/>
</dbReference>
<dbReference type="CDD" id="cd07201">
    <property type="entry name" value="cPLA2_Grp-IVB-IVD-IVE-IVF"/>
    <property type="match status" value="1"/>
</dbReference>
<dbReference type="FunFam" id="2.60.40.150:FF:000030">
    <property type="entry name" value="Phospholipase A2"/>
    <property type="match status" value="1"/>
</dbReference>
<dbReference type="FunFam" id="3.40.1090.10:FF:000002">
    <property type="entry name" value="Phospholipase A2"/>
    <property type="match status" value="1"/>
</dbReference>
<dbReference type="Gene3D" id="2.60.40.150">
    <property type="entry name" value="C2 domain"/>
    <property type="match status" value="1"/>
</dbReference>
<dbReference type="Gene3D" id="3.40.1090.10">
    <property type="entry name" value="Cytosolic phospholipase A2 catalytic domain"/>
    <property type="match status" value="1"/>
</dbReference>
<dbReference type="InterPro" id="IPR016035">
    <property type="entry name" value="Acyl_Trfase/lysoPLipase"/>
</dbReference>
<dbReference type="InterPro" id="IPR041847">
    <property type="entry name" value="C2_cPLA2"/>
</dbReference>
<dbReference type="InterPro" id="IPR000008">
    <property type="entry name" value="C2_dom"/>
</dbReference>
<dbReference type="InterPro" id="IPR035892">
    <property type="entry name" value="C2_domain_sf"/>
</dbReference>
<dbReference type="InterPro" id="IPR040723">
    <property type="entry name" value="cPLA2_C2"/>
</dbReference>
<dbReference type="InterPro" id="IPR002642">
    <property type="entry name" value="LysoPLipase_cat_dom"/>
</dbReference>
<dbReference type="PANTHER" id="PTHR10728">
    <property type="entry name" value="CYTOSOLIC PHOSPHOLIPASE A2"/>
    <property type="match status" value="1"/>
</dbReference>
<dbReference type="PANTHER" id="PTHR10728:SF24">
    <property type="entry name" value="CYTOSOLIC PHOSPHOLIPASE A2 EPSILON"/>
    <property type="match status" value="1"/>
</dbReference>
<dbReference type="Pfam" id="PF00168">
    <property type="entry name" value="C2"/>
    <property type="match status" value="1"/>
</dbReference>
<dbReference type="Pfam" id="PF18695">
    <property type="entry name" value="cPLA2_C2"/>
    <property type="match status" value="1"/>
</dbReference>
<dbReference type="Pfam" id="PF01735">
    <property type="entry name" value="PLA2_B"/>
    <property type="match status" value="1"/>
</dbReference>
<dbReference type="SMART" id="SM00239">
    <property type="entry name" value="C2"/>
    <property type="match status" value="1"/>
</dbReference>
<dbReference type="SMART" id="SM00022">
    <property type="entry name" value="PLAc"/>
    <property type="match status" value="1"/>
</dbReference>
<dbReference type="SUPFAM" id="SSF49562">
    <property type="entry name" value="C2 domain (Calcium/lipid-binding domain, CaLB)"/>
    <property type="match status" value="1"/>
</dbReference>
<dbReference type="SUPFAM" id="SSF52151">
    <property type="entry name" value="FabD/lysophospholipase-like"/>
    <property type="match status" value="1"/>
</dbReference>
<dbReference type="PROSITE" id="PS50004">
    <property type="entry name" value="C2"/>
    <property type="match status" value="1"/>
</dbReference>
<dbReference type="PROSITE" id="PS51210">
    <property type="entry name" value="PLA2C"/>
    <property type="match status" value="1"/>
</dbReference>
<proteinExistence type="evidence at protein level"/>
<organism>
    <name type="scientific">Homo sapiens</name>
    <name type="common">Human</name>
    <dbReference type="NCBI Taxonomy" id="9606"/>
    <lineage>
        <taxon>Eukaryota</taxon>
        <taxon>Metazoa</taxon>
        <taxon>Chordata</taxon>
        <taxon>Craniata</taxon>
        <taxon>Vertebrata</taxon>
        <taxon>Euteleostomi</taxon>
        <taxon>Mammalia</taxon>
        <taxon>Eutheria</taxon>
        <taxon>Euarchontoglires</taxon>
        <taxon>Primates</taxon>
        <taxon>Haplorrhini</taxon>
        <taxon>Catarrhini</taxon>
        <taxon>Hominidae</taxon>
        <taxon>Homo</taxon>
    </lineage>
</organism>
<reference key="1">
    <citation type="journal article" date="2004" name="Nat. Genet.">
        <title>Complete sequencing and characterization of 21,243 full-length human cDNAs.</title>
        <authorList>
            <person name="Ota T."/>
            <person name="Suzuki Y."/>
            <person name="Nishikawa T."/>
            <person name="Otsuki T."/>
            <person name="Sugiyama T."/>
            <person name="Irie R."/>
            <person name="Wakamatsu A."/>
            <person name="Hayashi K."/>
            <person name="Sato H."/>
            <person name="Nagai K."/>
            <person name="Kimura K."/>
            <person name="Makita H."/>
            <person name="Sekine M."/>
            <person name="Obayashi M."/>
            <person name="Nishi T."/>
            <person name="Shibahara T."/>
            <person name="Tanaka T."/>
            <person name="Ishii S."/>
            <person name="Yamamoto J."/>
            <person name="Saito K."/>
            <person name="Kawai Y."/>
            <person name="Isono Y."/>
            <person name="Nakamura Y."/>
            <person name="Nagahari K."/>
            <person name="Murakami K."/>
            <person name="Yasuda T."/>
            <person name="Iwayanagi T."/>
            <person name="Wagatsuma M."/>
            <person name="Shiratori A."/>
            <person name="Sudo H."/>
            <person name="Hosoiri T."/>
            <person name="Kaku Y."/>
            <person name="Kodaira H."/>
            <person name="Kondo H."/>
            <person name="Sugawara M."/>
            <person name="Takahashi M."/>
            <person name="Kanda K."/>
            <person name="Yokoi T."/>
            <person name="Furuya T."/>
            <person name="Kikkawa E."/>
            <person name="Omura Y."/>
            <person name="Abe K."/>
            <person name="Kamihara K."/>
            <person name="Katsuta N."/>
            <person name="Sato K."/>
            <person name="Tanikawa M."/>
            <person name="Yamazaki M."/>
            <person name="Ninomiya K."/>
            <person name="Ishibashi T."/>
            <person name="Yamashita H."/>
            <person name="Murakawa K."/>
            <person name="Fujimori K."/>
            <person name="Tanai H."/>
            <person name="Kimata M."/>
            <person name="Watanabe M."/>
            <person name="Hiraoka S."/>
            <person name="Chiba Y."/>
            <person name="Ishida S."/>
            <person name="Ono Y."/>
            <person name="Takiguchi S."/>
            <person name="Watanabe S."/>
            <person name="Yosida M."/>
            <person name="Hotuta T."/>
            <person name="Kusano J."/>
            <person name="Kanehori K."/>
            <person name="Takahashi-Fujii A."/>
            <person name="Hara H."/>
            <person name="Tanase T.-O."/>
            <person name="Nomura Y."/>
            <person name="Togiya S."/>
            <person name="Komai F."/>
            <person name="Hara R."/>
            <person name="Takeuchi K."/>
            <person name="Arita M."/>
            <person name="Imose N."/>
            <person name="Musashino K."/>
            <person name="Yuuki H."/>
            <person name="Oshima A."/>
            <person name="Sasaki N."/>
            <person name="Aotsuka S."/>
            <person name="Yoshikawa Y."/>
            <person name="Matsunawa H."/>
            <person name="Ichihara T."/>
            <person name="Shiohata N."/>
            <person name="Sano S."/>
            <person name="Moriya S."/>
            <person name="Momiyama H."/>
            <person name="Satoh N."/>
            <person name="Takami S."/>
            <person name="Terashima Y."/>
            <person name="Suzuki O."/>
            <person name="Nakagawa S."/>
            <person name="Senoh A."/>
            <person name="Mizoguchi H."/>
            <person name="Goto Y."/>
            <person name="Shimizu F."/>
            <person name="Wakebe H."/>
            <person name="Hishigaki H."/>
            <person name="Watanabe T."/>
            <person name="Sugiyama A."/>
            <person name="Takemoto M."/>
            <person name="Kawakami B."/>
            <person name="Yamazaki M."/>
            <person name="Watanabe K."/>
            <person name="Kumagai A."/>
            <person name="Itakura S."/>
            <person name="Fukuzumi Y."/>
            <person name="Fujimori Y."/>
            <person name="Komiyama M."/>
            <person name="Tashiro H."/>
            <person name="Tanigami A."/>
            <person name="Fujiwara T."/>
            <person name="Ono T."/>
            <person name="Yamada K."/>
            <person name="Fujii Y."/>
            <person name="Ozaki K."/>
            <person name="Hirao M."/>
            <person name="Ohmori Y."/>
            <person name="Kawabata A."/>
            <person name="Hikiji T."/>
            <person name="Kobatake N."/>
            <person name="Inagaki H."/>
            <person name="Ikema Y."/>
            <person name="Okamoto S."/>
            <person name="Okitani R."/>
            <person name="Kawakami T."/>
            <person name="Noguchi S."/>
            <person name="Itoh T."/>
            <person name="Shigeta K."/>
            <person name="Senba T."/>
            <person name="Matsumura K."/>
            <person name="Nakajima Y."/>
            <person name="Mizuno T."/>
            <person name="Morinaga M."/>
            <person name="Sasaki M."/>
            <person name="Togashi T."/>
            <person name="Oyama M."/>
            <person name="Hata H."/>
            <person name="Watanabe M."/>
            <person name="Komatsu T."/>
            <person name="Mizushima-Sugano J."/>
            <person name="Satoh T."/>
            <person name="Shirai Y."/>
            <person name="Takahashi Y."/>
            <person name="Nakagawa K."/>
            <person name="Okumura K."/>
            <person name="Nagase T."/>
            <person name="Nomura N."/>
            <person name="Kikuchi H."/>
            <person name="Masuho Y."/>
            <person name="Yamashita R."/>
            <person name="Nakai K."/>
            <person name="Yada T."/>
            <person name="Nakamura Y."/>
            <person name="Ohara O."/>
            <person name="Isogai T."/>
            <person name="Sugano S."/>
        </authorList>
    </citation>
    <scope>NUCLEOTIDE SEQUENCE [LARGE SCALE MRNA] (ISOFORM 2)</scope>
    <source>
        <tissue>Tongue</tissue>
    </source>
</reference>
<reference key="2">
    <citation type="journal article" date="2006" name="Nature">
        <title>Analysis of the DNA sequence and duplication history of human chromosome 15.</title>
        <authorList>
            <person name="Zody M.C."/>
            <person name="Garber M."/>
            <person name="Sharpe T."/>
            <person name="Young S.K."/>
            <person name="Rowen L."/>
            <person name="O'Neill K."/>
            <person name="Whittaker C.A."/>
            <person name="Kamal M."/>
            <person name="Chang J.L."/>
            <person name="Cuomo C.A."/>
            <person name="Dewar K."/>
            <person name="FitzGerald M.G."/>
            <person name="Kodira C.D."/>
            <person name="Madan A."/>
            <person name="Qin S."/>
            <person name="Yang X."/>
            <person name="Abbasi N."/>
            <person name="Abouelleil A."/>
            <person name="Arachchi H.M."/>
            <person name="Baradarani L."/>
            <person name="Birditt B."/>
            <person name="Bloom S."/>
            <person name="Bloom T."/>
            <person name="Borowsky M.L."/>
            <person name="Burke J."/>
            <person name="Butler J."/>
            <person name="Cook A."/>
            <person name="DeArellano K."/>
            <person name="DeCaprio D."/>
            <person name="Dorris L. III"/>
            <person name="Dors M."/>
            <person name="Eichler E.E."/>
            <person name="Engels R."/>
            <person name="Fahey J."/>
            <person name="Fleetwood P."/>
            <person name="Friedman C."/>
            <person name="Gearin G."/>
            <person name="Hall J.L."/>
            <person name="Hensley G."/>
            <person name="Johnson E."/>
            <person name="Jones C."/>
            <person name="Kamat A."/>
            <person name="Kaur A."/>
            <person name="Locke D.P."/>
            <person name="Madan A."/>
            <person name="Munson G."/>
            <person name="Jaffe D.B."/>
            <person name="Lui A."/>
            <person name="Macdonald P."/>
            <person name="Mauceli E."/>
            <person name="Naylor J.W."/>
            <person name="Nesbitt R."/>
            <person name="Nicol R."/>
            <person name="O'Leary S.B."/>
            <person name="Ratcliffe A."/>
            <person name="Rounsley S."/>
            <person name="She X."/>
            <person name="Sneddon K.M.B."/>
            <person name="Stewart S."/>
            <person name="Sougnez C."/>
            <person name="Stone S.M."/>
            <person name="Topham K."/>
            <person name="Vincent D."/>
            <person name="Wang S."/>
            <person name="Zimmer A.R."/>
            <person name="Birren B.W."/>
            <person name="Hood L."/>
            <person name="Lander E.S."/>
            <person name="Nusbaum C."/>
        </authorList>
    </citation>
    <scope>NUCLEOTIDE SEQUENCE [LARGE SCALE GENOMIC DNA]</scope>
</reference>
<reference key="3">
    <citation type="journal article" date="2004" name="Genome Res.">
        <title>The status, quality, and expansion of the NIH full-length cDNA project: the Mammalian Gene Collection (MGC).</title>
        <authorList>
            <consortium name="The MGC Project Team"/>
        </authorList>
    </citation>
    <scope>NUCLEOTIDE SEQUENCE [LARGE SCALE MRNA] OF 366-868</scope>
    <source>
        <tissue>Heart</tissue>
        <tissue>Lung</tissue>
    </source>
</reference>
<reference key="4">
    <citation type="journal article" date="2014" name="J. Cell Sci.">
        <title>Cytosolic phospholipase A(2)epsilon drives recycling through the clathrin-independent endocytic route.</title>
        <authorList>
            <person name="Capestrano M."/>
            <person name="Mariggio S."/>
            <person name="Perinetti G."/>
            <person name="Egorova A.V."/>
            <person name="Iacobacci S."/>
            <person name="Santoro M."/>
            <person name="Di Pentima A."/>
            <person name="Iurisci C."/>
            <person name="Egorov M.V."/>
            <person name="Di Tullio G."/>
            <person name="Buccione R."/>
            <person name="Luini A."/>
            <person name="Polishchuk R.S."/>
        </authorList>
    </citation>
    <scope>FUNCTION</scope>
    <scope>SUBCELLULAR LOCATION</scope>
</reference>
<reference key="5">
    <citation type="journal article" date="2018" name="Biochim. Biophys. Acta">
        <title>Phosphatidylserine-stimulated production of N-acyl-phosphatidylethanolamines by Ca2+-dependent N-acyltransferase.</title>
        <authorList>
            <person name="Hussain Z."/>
            <person name="Uyama T."/>
            <person name="Kawai K."/>
            <person name="Binte Mustafiz S.S."/>
            <person name="Tsuboi K."/>
            <person name="Araki N."/>
            <person name="Ueda N."/>
        </authorList>
    </citation>
    <scope>FUNCTION</scope>
    <scope>CATALYTIC ACTIVITY</scope>
    <scope>COFACTOR</scope>
    <scope>BIOPHYSICOCHEMICAL PROPERTIES</scope>
    <scope>ACTIVITY REGULATION</scope>
</reference>
<reference key="6">
    <citation type="journal article" date="2019" name="J. Biochem.">
        <title>The role of intracellular anionic phospholipids in the production of N-acyl-phosphatidylethanolamines by cytosolic phospholipase A2 epsilon.</title>
        <authorList>
            <person name="Binte Mustafiz S.S."/>
            <person name="Uyama T."/>
            <person name="Hussain Z."/>
            <person name="Kawai K."/>
            <person name="Tsuboi K."/>
            <person name="Araki N."/>
            <person name="Ueda N."/>
        </authorList>
    </citation>
    <scope>FUNCTION</scope>
    <scope>CATALYTIC ACTIVITY</scope>
    <scope>ACTIVITY REGULATION</scope>
    <scope>REGION</scope>
    <scope>MUTAGENESIS OF SER-412</scope>
</reference>
<feature type="chain" id="PRO_0000247025" description="Cytosolic phospholipase A2 epsilon">
    <location>
        <begin position="1"/>
        <end position="868"/>
    </location>
</feature>
<feature type="domain" description="C2" evidence="3">
    <location>
        <begin position="46"/>
        <end position="170"/>
    </location>
</feature>
<feature type="domain" description="PLA2c" evidence="4">
    <location>
        <begin position="324"/>
        <end position="856"/>
    </location>
</feature>
<feature type="region of interest" description="Disordered" evidence="5">
    <location>
        <begin position="1"/>
        <end position="46"/>
    </location>
</feature>
<feature type="region of interest" description="Required for localization at membrane structures" evidence="7">
    <location>
        <begin position="857"/>
        <end position="868"/>
    </location>
</feature>
<feature type="active site" description="Nucleophile" evidence="1">
    <location>
        <position position="412"/>
    </location>
</feature>
<feature type="active site" description="Proton acceptor" evidence="1">
    <location>
        <position position="700"/>
    </location>
</feature>
<feature type="binding site" evidence="3">
    <location>
        <position position="84"/>
    </location>
    <ligand>
        <name>Ca(2+)</name>
        <dbReference type="ChEBI" id="CHEBI:29108"/>
        <label>1</label>
    </ligand>
</feature>
<feature type="binding site" evidence="3">
    <location>
        <position position="84"/>
    </location>
    <ligand>
        <name>Ca(2+)</name>
        <dbReference type="ChEBI" id="CHEBI:29108"/>
        <label>2</label>
    </ligand>
</feature>
<feature type="binding site" evidence="3">
    <location>
        <position position="90"/>
    </location>
    <ligand>
        <name>Ca(2+)</name>
        <dbReference type="ChEBI" id="CHEBI:29108"/>
        <label>1</label>
    </ligand>
</feature>
<feature type="binding site" evidence="3">
    <location>
        <position position="140"/>
    </location>
    <ligand>
        <name>Ca(2+)</name>
        <dbReference type="ChEBI" id="CHEBI:29108"/>
        <label>1</label>
    </ligand>
</feature>
<feature type="binding site" evidence="3">
    <location>
        <position position="140"/>
    </location>
    <ligand>
        <name>Ca(2+)</name>
        <dbReference type="ChEBI" id="CHEBI:29108"/>
        <label>2</label>
    </ligand>
</feature>
<feature type="binding site" evidence="3">
    <location>
        <position position="142"/>
    </location>
    <ligand>
        <name>Ca(2+)</name>
        <dbReference type="ChEBI" id="CHEBI:29108"/>
        <label>1</label>
    </ligand>
</feature>
<feature type="binding site" evidence="3">
    <location>
        <position position="142"/>
    </location>
    <ligand>
        <name>Ca(2+)</name>
        <dbReference type="ChEBI" id="CHEBI:29108"/>
        <label>2</label>
    </ligand>
</feature>
<feature type="binding site" evidence="3">
    <location>
        <position position="148"/>
    </location>
    <ligand>
        <name>Ca(2+)</name>
        <dbReference type="ChEBI" id="CHEBI:29108"/>
        <label>2</label>
    </ligand>
</feature>
<feature type="modified residue" description="Phosphoserine" evidence="2">
    <location>
        <position position="800"/>
    </location>
</feature>
<feature type="splice variant" id="VSP_019883" description="In isoform 2." evidence="8">
    <location>
        <begin position="1"/>
        <end position="376"/>
    </location>
</feature>
<feature type="sequence variant" id="VAR_027052" description="In dbSNP:rs4924595.">
    <original>N</original>
    <variation>S</variation>
    <location>
        <position position="400"/>
    </location>
</feature>
<feature type="sequence variant" id="VAR_027053" description="In dbSNP:rs8030775.">
    <original>A</original>
    <variation>T</variation>
    <location>
        <position position="693"/>
    </location>
</feature>
<feature type="mutagenesis site" description="Impairs localization at membrane structures and N-acyl transferase activity." evidence="7">
    <original>S</original>
    <variation>A</variation>
    <location>
        <position position="412"/>
    </location>
</feature>
<feature type="sequence conflict" description="In Ref. 1; BAC87034." evidence="11" ref="1">
    <original>M</original>
    <variation>V</variation>
    <location>
        <position position="389"/>
    </location>
</feature>
<feature type="sequence conflict" description="In Ref. 1; BAC87034." evidence="11" ref="1">
    <original>A</original>
    <variation>P</variation>
    <location>
        <position position="502"/>
    </location>
</feature>
<feature type="sequence conflict" description="In Ref. 1; BAC87034." evidence="11" ref="1">
    <original>T</original>
    <variation>A</variation>
    <location>
        <position position="690"/>
    </location>
</feature>
<feature type="sequence conflict" description="In Ref. 1; BAC87034." evidence="11" ref="1">
    <original>C</original>
    <variation>Y</variation>
    <location>
        <position position="765"/>
    </location>
</feature>
<comment type="function">
    <text evidence="2 6 7">Calcium-dependent N-acyltransferase involved in the biosynthesis of N-acyl ethanolamines (NAEs) in the brain (PubMed:29447909). Transfers the sn-1 fatty acyl chain of phosphatidylcholine (fatty acyl donor) to the amine group of phosphatidylethanolamine (fatty acyl acceptor) to generate N-acyl phosphatidylethanolamine (NAPE). Similarly can use plasmenylethanolamine as a fatty acyl acceptor to form N-acyl plasmenylethanolamine (N-Acyl-PlsEt). Both NAPE and N-Acyl-PlsEt can serve as precursors of bioactive NAEs like N-arachidonoyl phosphatidylethanolamine also called anandamide (PubMed:29447909, PubMed:30517655). Has weak phospholipase A2 and lysophospholipase activities (By similarity). Regulates intracellular membrane trafficking that requires modulation of membrane curvature as it occurs by enrichment in lysophospholipids. Promotes tubule formation involved in clathrin-independent endocytotic trafficking and cargo recycling (By similarity).</text>
</comment>
<comment type="catalytic activity">
    <reaction evidence="6 7">
        <text>a 1,2-diacyl-sn-glycero-3-phosphoethanolamine + a 1,2-diacyl-sn-glycero-3-phosphocholine = an N-acyl-1,2-diacyl-sn-glycero-3-phosphoethanolamine + a 2-acyl-sn-glycero-3-phosphocholine + H(+)</text>
        <dbReference type="Rhea" id="RHEA:45188"/>
        <dbReference type="ChEBI" id="CHEBI:15378"/>
        <dbReference type="ChEBI" id="CHEBI:57643"/>
        <dbReference type="ChEBI" id="CHEBI:57875"/>
        <dbReference type="ChEBI" id="CHEBI:62537"/>
        <dbReference type="ChEBI" id="CHEBI:64612"/>
    </reaction>
    <physiologicalReaction direction="left-to-right" evidence="12 13">
        <dbReference type="Rhea" id="RHEA:45189"/>
    </physiologicalReaction>
</comment>
<comment type="catalytic activity">
    <reaction evidence="2">
        <text>1-hexadecanoyl-2-octadecanoyl-sn-glycero-3-phosphocholine + 1,2-di-(9Z-octadecenoyl)-sn-glycero-3-phosphoethanolamine = 2-octadecanoyl-sn-glycero-3-phosphocholine + N-hexadecanoyl-1,2-di-(9Z-octadecenoyl)-sn-glycero-3-phosphoethanolamine + H(+)</text>
        <dbReference type="Rhea" id="RHEA:55252"/>
        <dbReference type="ChEBI" id="CHEBI:15378"/>
        <dbReference type="ChEBI" id="CHEBI:73000"/>
        <dbReference type="ChEBI" id="CHEBI:74986"/>
        <dbReference type="ChEBI" id="CHEBI:76076"/>
        <dbReference type="ChEBI" id="CHEBI:78097"/>
    </reaction>
    <physiologicalReaction direction="left-to-right" evidence="2">
        <dbReference type="Rhea" id="RHEA:55253"/>
    </physiologicalReaction>
</comment>
<comment type="catalytic activity">
    <reaction evidence="2">
        <text>1-octadecanoyl-2-hexadecanoyl-sn-glycero-3-phosphocholine + 1,2-di-(9Z-octadecenoyl)-sn-glycero-3-phosphoethanolamine = N-octadecanoyl-1,2-di-(9Z-octadecenoyl)-sn-glycero-3-phosphoethanolamine + 2-hexadecanoyl-sn-glycero-3-phosphocholine + H(+)</text>
        <dbReference type="Rhea" id="RHEA:55248"/>
        <dbReference type="ChEBI" id="CHEBI:15378"/>
        <dbReference type="ChEBI" id="CHEBI:74986"/>
        <dbReference type="ChEBI" id="CHEBI:75026"/>
        <dbReference type="ChEBI" id="CHEBI:76078"/>
        <dbReference type="ChEBI" id="CHEBI:85292"/>
    </reaction>
    <physiologicalReaction direction="left-to-right" evidence="2">
        <dbReference type="Rhea" id="RHEA:55249"/>
    </physiologicalReaction>
</comment>
<comment type="catalytic activity">
    <reaction evidence="6 7">
        <text>1,2-di-(9Z-octadecenoyl)-sn-glycero-3-phosphoethanolamine + 1,2-dihexadecanoyl-sn-glycero-3-phosphocholine = N-hexadecanoyl-1,2-di-(9Z-octadecenoyl)-sn-glycero-3-phosphoethanolamine + 2-hexadecanoyl-sn-glycero-3-phosphocholine + H(+)</text>
        <dbReference type="Rhea" id="RHEA:45172"/>
        <dbReference type="ChEBI" id="CHEBI:15378"/>
        <dbReference type="ChEBI" id="CHEBI:72999"/>
        <dbReference type="ChEBI" id="CHEBI:74986"/>
        <dbReference type="ChEBI" id="CHEBI:76078"/>
        <dbReference type="ChEBI" id="CHEBI:78097"/>
    </reaction>
    <physiologicalReaction direction="left-to-right" evidence="12 13">
        <dbReference type="Rhea" id="RHEA:45173"/>
    </physiologicalReaction>
</comment>
<comment type="catalytic activity">
    <reaction evidence="2">
        <text>1,2-di-(5Z,8Z,11Z,14Z-eicosatetraenoyl)-sn-glycero-3-phosphocholine + 1,2-di-(9Z-octadecenoyl)-sn-glycero-3-phosphoethanolamine = N-(5Z,8Z,11Z,14Z-eicosatetraenoyl)-1,2-di-(9Z-octadecenoyl)-sn-glycero-3-phosphoethanolamine + 2-(5Z,8Z,11Z,14Z)-eicosatetraenoyl-sn-glycero-3-phosphocholine + H(+)</text>
        <dbReference type="Rhea" id="RHEA:55256"/>
        <dbReference type="ChEBI" id="CHEBI:15378"/>
        <dbReference type="ChEBI" id="CHEBI:60657"/>
        <dbReference type="ChEBI" id="CHEBI:74986"/>
        <dbReference type="ChEBI" id="CHEBI:76079"/>
        <dbReference type="ChEBI" id="CHEBI:85277"/>
    </reaction>
    <physiologicalReaction direction="left-to-right" evidence="2">
        <dbReference type="Rhea" id="RHEA:55257"/>
    </physiologicalReaction>
</comment>
<comment type="catalytic activity">
    <reaction evidence="2">
        <text>2 1,2-di-(9Z-octadecenoyl)-sn-glycero-3-phosphoethanolamine = N,1,2-tri-(9Z-octadecenoyl)-sn-glycero-3-phosphoethanolamine + 2-(9Z-octadecenoyl)-sn-glycero-3-phosphoethanolamine + H(+)</text>
        <dbReference type="Rhea" id="RHEA:55260"/>
        <dbReference type="ChEBI" id="CHEBI:15378"/>
        <dbReference type="ChEBI" id="CHEBI:74986"/>
        <dbReference type="ChEBI" id="CHEBI:76088"/>
        <dbReference type="ChEBI" id="CHEBI:85291"/>
    </reaction>
    <physiologicalReaction direction="left-to-right" evidence="2">
        <dbReference type="Rhea" id="RHEA:55261"/>
    </physiologicalReaction>
</comment>
<comment type="catalytic activity">
    <reaction evidence="2">
        <text>1-(1Z-octadecenyl)-2-(9Z-octadecenoyl)-sn-glycero-3-phosphoethanolamine + 1,2-dihexadecanoyl-sn-glycero-3-phosphocholine = 1-O-(1Z-octadecenoyl)-2-(9Z-octadecenoyl)-sn-glycero-3-phospho-N-hexadecanoyl-ethanolamine + 2-hexadecanoyl-sn-glycero-3-phosphocholine + H(+)</text>
        <dbReference type="Rhea" id="RHEA:63592"/>
        <dbReference type="ChEBI" id="CHEBI:15378"/>
        <dbReference type="ChEBI" id="CHEBI:72999"/>
        <dbReference type="ChEBI" id="CHEBI:76078"/>
        <dbReference type="ChEBI" id="CHEBI:78340"/>
        <dbReference type="ChEBI" id="CHEBI:138663"/>
    </reaction>
    <physiologicalReaction direction="left-to-right" evidence="2">
        <dbReference type="Rhea" id="RHEA:63593"/>
    </physiologicalReaction>
</comment>
<comment type="catalytic activity">
    <reaction evidence="2">
        <text>a 1,2-diacyl-sn-glycero-3-phosphocholine + H2O = a 1-acyl-sn-glycero-3-phosphocholine + a fatty acid + H(+)</text>
        <dbReference type="Rhea" id="RHEA:15801"/>
        <dbReference type="ChEBI" id="CHEBI:15377"/>
        <dbReference type="ChEBI" id="CHEBI:15378"/>
        <dbReference type="ChEBI" id="CHEBI:28868"/>
        <dbReference type="ChEBI" id="CHEBI:57643"/>
        <dbReference type="ChEBI" id="CHEBI:58168"/>
        <dbReference type="EC" id="3.1.1.4"/>
    </reaction>
    <physiologicalReaction direction="left-to-right" evidence="2">
        <dbReference type="Rhea" id="RHEA:15802"/>
    </physiologicalReaction>
</comment>
<comment type="catalytic activity">
    <reaction evidence="2">
        <text>1-hexadecanoyl-2-(5Z,8Z,11Z,14Z-eicosatetraenoyl)-sn-glycero-3-phosphocholine + H2O = 1-hexadecanoyl-sn-glycero-3-phosphocholine + (5Z,8Z,11Z,14Z)-eicosatetraenoate + H(+)</text>
        <dbReference type="Rhea" id="RHEA:40427"/>
        <dbReference type="ChEBI" id="CHEBI:15377"/>
        <dbReference type="ChEBI" id="CHEBI:15378"/>
        <dbReference type="ChEBI" id="CHEBI:32395"/>
        <dbReference type="ChEBI" id="CHEBI:72998"/>
        <dbReference type="ChEBI" id="CHEBI:73003"/>
    </reaction>
    <physiologicalReaction direction="left-to-right" evidence="2">
        <dbReference type="Rhea" id="RHEA:40428"/>
    </physiologicalReaction>
</comment>
<comment type="catalytic activity">
    <reaction evidence="2">
        <text>1-hexadecanoyl-sn-glycero-3-phosphocholine + H2O = sn-glycerol 3-phosphocholine + hexadecanoate + H(+)</text>
        <dbReference type="Rhea" id="RHEA:40435"/>
        <dbReference type="ChEBI" id="CHEBI:7896"/>
        <dbReference type="ChEBI" id="CHEBI:15377"/>
        <dbReference type="ChEBI" id="CHEBI:15378"/>
        <dbReference type="ChEBI" id="CHEBI:16870"/>
        <dbReference type="ChEBI" id="CHEBI:72998"/>
    </reaction>
    <physiologicalReaction direction="left-to-right" evidence="2">
        <dbReference type="Rhea" id="RHEA:40436"/>
    </physiologicalReaction>
</comment>
<comment type="cofactor">
    <cofactor evidence="3 6">
        <name>Ca(2+)</name>
        <dbReference type="ChEBI" id="CHEBI:29108"/>
    </cofactor>
</comment>
<comment type="activity regulation">
    <text evidence="6 7">Stimulated by cytosolic Ca(2+). Stimulated by anionic phospholipids such as phosphatidylserines, phosphatidates and phosphatidylinositols.</text>
</comment>
<comment type="biophysicochemical properties">
    <phDependence>
        <text evidence="6">Optimum pH is 8.</text>
    </phDependence>
</comment>
<comment type="subcellular location">
    <subcellularLocation>
        <location evidence="2">Cytoplasm</location>
        <location evidence="2">Cytosol</location>
    </subcellularLocation>
    <subcellularLocation>
        <location evidence="2">Early endosome membrane</location>
        <topology evidence="2">Peripheral membrane protein</topology>
        <orientation evidence="2">Cytoplasmic side</orientation>
    </subcellularLocation>
    <subcellularLocation>
        <location evidence="2">Lysosome membrane</location>
        <topology evidence="2">Peripheral membrane protein</topology>
        <orientation evidence="2">Cytoplasmic side</orientation>
    </subcellularLocation>
    <subcellularLocation>
        <location evidence="2">Cell membrane</location>
        <topology>Peripheral membrane protein</topology>
        <orientation evidence="2">Cytoplasmic side</orientation>
    </subcellularLocation>
    <text evidence="2">Targeted to clathrin-independent endocytotic vesicles through binding to phosphoinositides, especially phosphatidylinositol 4,5-bisphosphates.</text>
</comment>
<comment type="alternative products">
    <event type="alternative splicing"/>
    <isoform>
        <id>Q3MJ16-3</id>
        <name>1</name>
        <sequence type="displayed"/>
    </isoform>
    <isoform>
        <id>Q3MJ16-2</id>
        <name>2</name>
        <sequence type="described" ref="VSP_019883"/>
    </isoform>
</comment>
<comment type="domain">
    <text evidence="1">The N-terminal C2 domain associates with lipid membranes upon calcium binding. It modulates enzyme activity by presenting the active site to its substrate in response to elevations of cytosolic Ca(2+) (By similarity).</text>
</comment>
<accession>Q3MJ16</accession>
<accession>B7WPN2</accession>
<accession>Q6ZSC0</accession>